<dbReference type="PIR" id="S70495">
    <property type="entry name" value="S70495"/>
</dbReference>
<dbReference type="SMR" id="Q10986"/>
<dbReference type="GO" id="GO:0008199">
    <property type="term" value="F:ferric iron binding"/>
    <property type="evidence" value="ECO:0007669"/>
    <property type="project" value="InterPro"/>
</dbReference>
<dbReference type="GO" id="GO:0006879">
    <property type="term" value="P:intracellular iron ion homeostasis"/>
    <property type="evidence" value="ECO:0007669"/>
    <property type="project" value="UniProtKB-KW"/>
</dbReference>
<dbReference type="GO" id="GO:0006826">
    <property type="term" value="P:iron ion transport"/>
    <property type="evidence" value="ECO:0007669"/>
    <property type="project" value="InterPro"/>
</dbReference>
<dbReference type="Gene3D" id="1.20.1260.10">
    <property type="match status" value="1"/>
</dbReference>
<dbReference type="InterPro" id="IPR002024">
    <property type="entry name" value="Bacterioferritin"/>
</dbReference>
<dbReference type="InterPro" id="IPR012347">
    <property type="entry name" value="Ferritin-like"/>
</dbReference>
<dbReference type="InterPro" id="IPR009040">
    <property type="entry name" value="Ferritin-like_diiron"/>
</dbReference>
<dbReference type="InterPro" id="IPR009078">
    <property type="entry name" value="Ferritin-like_SF"/>
</dbReference>
<dbReference type="PRINTS" id="PR00601">
    <property type="entry name" value="BACFERRITIN"/>
</dbReference>
<dbReference type="SUPFAM" id="SSF47240">
    <property type="entry name" value="Ferritin-like"/>
    <property type="match status" value="1"/>
</dbReference>
<dbReference type="PROSITE" id="PS00549">
    <property type="entry name" value="BACTERIOFERRITIN"/>
    <property type="match status" value="1"/>
</dbReference>
<dbReference type="PROSITE" id="PS50905">
    <property type="entry name" value="FERRITIN_LIKE"/>
    <property type="match status" value="1"/>
</dbReference>
<evidence type="ECO:0000250" key="1"/>
<evidence type="ECO:0000255" key="2"/>
<evidence type="ECO:0000255" key="3">
    <source>
        <dbReference type="PROSITE-ProRule" id="PRU00085"/>
    </source>
</evidence>
<evidence type="ECO:0000269" key="4">
    <source>
    </source>
</evidence>
<evidence type="ECO:0000305" key="5"/>
<name>BFRL_ABSSP</name>
<reference evidence="5" key="1">
    <citation type="journal article" date="1996" name="FEBS Lett.">
        <title>Fungal ferritins: the ferritin from mycelia of Absidia spinosa is a bacterioferritin.</title>
        <authorList>
            <person name="Carrano C.J."/>
            <person name="Boehnke R."/>
            <person name="Matzanke B.F."/>
        </authorList>
    </citation>
    <scope>PROTEIN SEQUENCE</scope>
    <scope>FUNCTION</scope>
    <scope>SUBUNIT</scope>
    <source>
        <strain evidence="5">Tu268</strain>
        <tissue evidence="5">Mycelium</tissue>
    </source>
</reference>
<protein>
    <recommendedName>
        <fullName>Bacterioferritin light chain</fullName>
        <shortName>BFR</shortName>
    </recommendedName>
</protein>
<feature type="chain" id="PRO_0000302882" description="Bacterioferritin light chain">
    <location>
        <begin position="1"/>
        <end position="33" status="greater than"/>
    </location>
</feature>
<feature type="domain" description="Ferritin-like diiron" evidence="3">
    <location>
        <begin position="1"/>
        <end position="33" status="greater than"/>
    </location>
</feature>
<feature type="unsure residue" evidence="5">
    <location>
        <position position="20"/>
    </location>
</feature>
<feature type="non-terminal residue" evidence="5">
    <location>
        <position position="33"/>
    </location>
</feature>
<accession>Q10986</accession>
<sequence>MKGNREVINQLNQVLYHHLCAINQYFLHSRMND</sequence>
<comment type="function">
    <text evidence="1 4">May perform analogous functions in iron detoxification and storage to that of animal ferritins (By similarity). Contains approximately 750 iron atoms per molecule.</text>
</comment>
<comment type="subunit">
    <text evidence="4 5">Oligomer consisting of two types of subunits: light chain and heavy chain.</text>
</comment>
<comment type="similarity">
    <text evidence="2">Belongs to the bacterioferritin family.</text>
</comment>
<keyword id="KW-0903">Direct protein sequencing</keyword>
<keyword id="KW-0408">Iron</keyword>
<keyword id="KW-0409">Iron storage</keyword>
<keyword id="KW-0479">Metal-binding</keyword>
<organism>
    <name type="scientific">Absidia spinosa</name>
    <dbReference type="NCBI Taxonomy" id="126712"/>
    <lineage>
        <taxon>Eukaryota</taxon>
        <taxon>Fungi</taxon>
        <taxon>Fungi incertae sedis</taxon>
        <taxon>Mucoromycota</taxon>
        <taxon>Mucoromycotina</taxon>
        <taxon>Mucoromycetes</taxon>
        <taxon>Mucorales</taxon>
        <taxon>Cunninghamellaceae</taxon>
        <taxon>Absidia</taxon>
    </lineage>
</organism>
<proteinExistence type="evidence at protein level"/>